<protein>
    <recommendedName>
        <fullName evidence="1">Aspartate carbamoyltransferase catalytic subunit</fullName>
        <ecNumber evidence="1">2.1.3.2</ecNumber>
    </recommendedName>
    <alternativeName>
        <fullName evidence="1">Aspartate transcarbamylase</fullName>
        <shortName evidence="1">ATCase</shortName>
    </alternativeName>
</protein>
<reference key="1">
    <citation type="journal article" date="2009" name="Genome Res.">
        <title>Complete genome of the cellulolytic thermophile Acidothermus cellulolyticus 11B provides insights into its ecophysiological and evolutionary adaptations.</title>
        <authorList>
            <person name="Barabote R.D."/>
            <person name="Xie G."/>
            <person name="Leu D.H."/>
            <person name="Normand P."/>
            <person name="Necsulea A."/>
            <person name="Daubin V."/>
            <person name="Medigue C."/>
            <person name="Adney W.S."/>
            <person name="Xu X.C."/>
            <person name="Lapidus A."/>
            <person name="Parales R.E."/>
            <person name="Detter C."/>
            <person name="Pujic P."/>
            <person name="Bruce D."/>
            <person name="Lavire C."/>
            <person name="Challacombe J.F."/>
            <person name="Brettin T.S."/>
            <person name="Berry A.M."/>
        </authorList>
    </citation>
    <scope>NUCLEOTIDE SEQUENCE [LARGE SCALE GENOMIC DNA]</scope>
    <source>
        <strain>ATCC 43068 / DSM 8971 / 11B</strain>
    </source>
</reference>
<feature type="chain" id="PRO_0000321061" description="Aspartate carbamoyltransferase catalytic subunit">
    <location>
        <begin position="1"/>
        <end position="323"/>
    </location>
</feature>
<feature type="binding site" evidence="1">
    <location>
        <position position="55"/>
    </location>
    <ligand>
        <name>carbamoyl phosphate</name>
        <dbReference type="ChEBI" id="CHEBI:58228"/>
    </ligand>
</feature>
<feature type="binding site" evidence="1">
    <location>
        <position position="56"/>
    </location>
    <ligand>
        <name>carbamoyl phosphate</name>
        <dbReference type="ChEBI" id="CHEBI:58228"/>
    </ligand>
</feature>
<feature type="binding site" evidence="1">
    <location>
        <position position="83"/>
    </location>
    <ligand>
        <name>L-aspartate</name>
        <dbReference type="ChEBI" id="CHEBI:29991"/>
    </ligand>
</feature>
<feature type="binding site" evidence="1">
    <location>
        <position position="105"/>
    </location>
    <ligand>
        <name>carbamoyl phosphate</name>
        <dbReference type="ChEBI" id="CHEBI:58228"/>
    </ligand>
</feature>
<feature type="binding site" evidence="1">
    <location>
        <position position="133"/>
    </location>
    <ligand>
        <name>carbamoyl phosphate</name>
        <dbReference type="ChEBI" id="CHEBI:58228"/>
    </ligand>
</feature>
<feature type="binding site" evidence="1">
    <location>
        <position position="136"/>
    </location>
    <ligand>
        <name>carbamoyl phosphate</name>
        <dbReference type="ChEBI" id="CHEBI:58228"/>
    </ligand>
</feature>
<feature type="binding site" evidence="1">
    <location>
        <position position="166"/>
    </location>
    <ligand>
        <name>L-aspartate</name>
        <dbReference type="ChEBI" id="CHEBI:29991"/>
    </ligand>
</feature>
<feature type="binding site" evidence="1">
    <location>
        <position position="220"/>
    </location>
    <ligand>
        <name>L-aspartate</name>
        <dbReference type="ChEBI" id="CHEBI:29991"/>
    </ligand>
</feature>
<feature type="binding site" evidence="1">
    <location>
        <position position="261"/>
    </location>
    <ligand>
        <name>carbamoyl phosphate</name>
        <dbReference type="ChEBI" id="CHEBI:58228"/>
    </ligand>
</feature>
<feature type="binding site" evidence="1">
    <location>
        <position position="262"/>
    </location>
    <ligand>
        <name>carbamoyl phosphate</name>
        <dbReference type="ChEBI" id="CHEBI:58228"/>
    </ligand>
</feature>
<keyword id="KW-0665">Pyrimidine biosynthesis</keyword>
<keyword id="KW-1185">Reference proteome</keyword>
<keyword id="KW-0808">Transferase</keyword>
<gene>
    <name evidence="1" type="primary">pyrB</name>
    <name type="ordered locus">Acel_1301</name>
</gene>
<comment type="function">
    <text evidence="1">Catalyzes the condensation of carbamoyl phosphate and aspartate to form carbamoyl aspartate and inorganic phosphate, the committed step in the de novo pyrimidine nucleotide biosynthesis pathway.</text>
</comment>
<comment type="catalytic activity">
    <reaction evidence="1">
        <text>carbamoyl phosphate + L-aspartate = N-carbamoyl-L-aspartate + phosphate + H(+)</text>
        <dbReference type="Rhea" id="RHEA:20013"/>
        <dbReference type="ChEBI" id="CHEBI:15378"/>
        <dbReference type="ChEBI" id="CHEBI:29991"/>
        <dbReference type="ChEBI" id="CHEBI:32814"/>
        <dbReference type="ChEBI" id="CHEBI:43474"/>
        <dbReference type="ChEBI" id="CHEBI:58228"/>
        <dbReference type="EC" id="2.1.3.2"/>
    </reaction>
</comment>
<comment type="pathway">
    <text evidence="1">Pyrimidine metabolism; UMP biosynthesis via de novo pathway; (S)-dihydroorotate from bicarbonate: step 2/3.</text>
</comment>
<comment type="subunit">
    <text evidence="1">Heterododecamer (2C3:3R2) of six catalytic PyrB chains organized as two trimers (C3), and six regulatory PyrI chains organized as three dimers (R2).</text>
</comment>
<comment type="similarity">
    <text evidence="1">Belongs to the aspartate/ornithine carbamoyltransferase superfamily. ATCase family.</text>
</comment>
<sequence>MMRHLLSAGDLTRDDALLILDTAAELARLADRPIKKLPTLRGRTIVNLFYEDSTRTRTSFEAAAKRLSADVINFSAKGSSVSKGESLKDTALTLEAMGTDAVVIRHWASGAPHRLAGWVRGSVINAGDGTHEHPTQALLDAYTIRRHLGGVDGRRVAIVGDILHSRVARSNVTLLHTLGAEVTLVAPPTLLPVGVESWPCAVSYELDGVLPKCDAVMLLRVQRERMQAAFFPTSREYSRRYGLDAARLALLPEHAIVLHPGPMNRGVEIAAEVADSPRSVVVEQVANGVVVRMAVLYLLLGGGEPALAGRAAEPAAAAIGGGW</sequence>
<proteinExistence type="inferred from homology"/>
<name>PYRB_ACIC1</name>
<evidence type="ECO:0000255" key="1">
    <source>
        <dbReference type="HAMAP-Rule" id="MF_00001"/>
    </source>
</evidence>
<accession>A0LUG3</accession>
<dbReference type="EC" id="2.1.3.2" evidence="1"/>
<dbReference type="EMBL" id="CP000481">
    <property type="protein sequence ID" value="ABK53073.1"/>
    <property type="molecule type" value="Genomic_DNA"/>
</dbReference>
<dbReference type="RefSeq" id="WP_011720136.1">
    <property type="nucleotide sequence ID" value="NC_008578.1"/>
</dbReference>
<dbReference type="SMR" id="A0LUG3"/>
<dbReference type="FunCoup" id="A0LUG3">
    <property type="interactions" value="308"/>
</dbReference>
<dbReference type="STRING" id="351607.Acel_1301"/>
<dbReference type="KEGG" id="ace:Acel_1301"/>
<dbReference type="eggNOG" id="COG0540">
    <property type="taxonomic scope" value="Bacteria"/>
</dbReference>
<dbReference type="HOGENOM" id="CLU_043846_2_0_11"/>
<dbReference type="InParanoid" id="A0LUG3"/>
<dbReference type="OrthoDB" id="9774690at2"/>
<dbReference type="UniPathway" id="UPA00070">
    <property type="reaction ID" value="UER00116"/>
</dbReference>
<dbReference type="Proteomes" id="UP000008221">
    <property type="component" value="Chromosome"/>
</dbReference>
<dbReference type="GO" id="GO:0005829">
    <property type="term" value="C:cytosol"/>
    <property type="evidence" value="ECO:0007669"/>
    <property type="project" value="TreeGrafter"/>
</dbReference>
<dbReference type="GO" id="GO:0016597">
    <property type="term" value="F:amino acid binding"/>
    <property type="evidence" value="ECO:0007669"/>
    <property type="project" value="InterPro"/>
</dbReference>
<dbReference type="GO" id="GO:0004070">
    <property type="term" value="F:aspartate carbamoyltransferase activity"/>
    <property type="evidence" value="ECO:0007669"/>
    <property type="project" value="UniProtKB-UniRule"/>
</dbReference>
<dbReference type="GO" id="GO:0006207">
    <property type="term" value="P:'de novo' pyrimidine nucleobase biosynthetic process"/>
    <property type="evidence" value="ECO:0007669"/>
    <property type="project" value="InterPro"/>
</dbReference>
<dbReference type="GO" id="GO:0044205">
    <property type="term" value="P:'de novo' UMP biosynthetic process"/>
    <property type="evidence" value="ECO:0007669"/>
    <property type="project" value="UniProtKB-UniRule"/>
</dbReference>
<dbReference type="GO" id="GO:0006520">
    <property type="term" value="P:amino acid metabolic process"/>
    <property type="evidence" value="ECO:0007669"/>
    <property type="project" value="InterPro"/>
</dbReference>
<dbReference type="FunFam" id="3.40.50.1370:FF:000007">
    <property type="entry name" value="Aspartate carbamoyltransferase"/>
    <property type="match status" value="1"/>
</dbReference>
<dbReference type="Gene3D" id="3.40.50.1370">
    <property type="entry name" value="Aspartate/ornithine carbamoyltransferase"/>
    <property type="match status" value="2"/>
</dbReference>
<dbReference type="HAMAP" id="MF_00001">
    <property type="entry name" value="Asp_carb_tr"/>
    <property type="match status" value="1"/>
</dbReference>
<dbReference type="InterPro" id="IPR006132">
    <property type="entry name" value="Asp/Orn_carbamoyltranf_P-bd"/>
</dbReference>
<dbReference type="InterPro" id="IPR006130">
    <property type="entry name" value="Asp/Orn_carbamoylTrfase"/>
</dbReference>
<dbReference type="InterPro" id="IPR036901">
    <property type="entry name" value="Asp/Orn_carbamoylTrfase_sf"/>
</dbReference>
<dbReference type="InterPro" id="IPR002082">
    <property type="entry name" value="Asp_carbamoyltransf"/>
</dbReference>
<dbReference type="InterPro" id="IPR006131">
    <property type="entry name" value="Asp_carbamoyltransf_Asp/Orn-bd"/>
</dbReference>
<dbReference type="NCBIfam" id="TIGR00670">
    <property type="entry name" value="asp_carb_tr"/>
    <property type="match status" value="1"/>
</dbReference>
<dbReference type="NCBIfam" id="NF002032">
    <property type="entry name" value="PRK00856.1"/>
    <property type="match status" value="1"/>
</dbReference>
<dbReference type="PANTHER" id="PTHR45753:SF6">
    <property type="entry name" value="ASPARTATE CARBAMOYLTRANSFERASE"/>
    <property type="match status" value="1"/>
</dbReference>
<dbReference type="PANTHER" id="PTHR45753">
    <property type="entry name" value="ORNITHINE CARBAMOYLTRANSFERASE, MITOCHONDRIAL"/>
    <property type="match status" value="1"/>
</dbReference>
<dbReference type="Pfam" id="PF00185">
    <property type="entry name" value="OTCace"/>
    <property type="match status" value="1"/>
</dbReference>
<dbReference type="Pfam" id="PF02729">
    <property type="entry name" value="OTCace_N"/>
    <property type="match status" value="1"/>
</dbReference>
<dbReference type="PRINTS" id="PR00100">
    <property type="entry name" value="AOTCASE"/>
</dbReference>
<dbReference type="PRINTS" id="PR00101">
    <property type="entry name" value="ATCASE"/>
</dbReference>
<dbReference type="SUPFAM" id="SSF53671">
    <property type="entry name" value="Aspartate/ornithine carbamoyltransferase"/>
    <property type="match status" value="1"/>
</dbReference>
<dbReference type="PROSITE" id="PS00097">
    <property type="entry name" value="CARBAMOYLTRANSFERASE"/>
    <property type="match status" value="1"/>
</dbReference>
<organism>
    <name type="scientific">Acidothermus cellulolyticus (strain ATCC 43068 / DSM 8971 / 11B)</name>
    <dbReference type="NCBI Taxonomy" id="351607"/>
    <lineage>
        <taxon>Bacteria</taxon>
        <taxon>Bacillati</taxon>
        <taxon>Actinomycetota</taxon>
        <taxon>Actinomycetes</taxon>
        <taxon>Acidothermales</taxon>
        <taxon>Acidothermaceae</taxon>
        <taxon>Acidothermus</taxon>
    </lineage>
</organism>